<protein>
    <recommendedName>
        <fullName>Photosystem I assembly protein Ycf4</fullName>
    </recommendedName>
</protein>
<keyword id="KW-0472">Membrane</keyword>
<keyword id="KW-0602">Photosynthesis</keyword>
<keyword id="KW-0793">Thylakoid</keyword>
<keyword id="KW-0812">Transmembrane</keyword>
<keyword id="KW-1133">Transmembrane helix</keyword>
<name>YCF4_PARMW</name>
<reference key="1">
    <citation type="journal article" date="2003" name="Nature">
        <title>The genome of a motile marine Synechococcus.</title>
        <authorList>
            <person name="Palenik B."/>
            <person name="Brahamsha B."/>
            <person name="Larimer F.W."/>
            <person name="Land M.L."/>
            <person name="Hauser L."/>
            <person name="Chain P."/>
            <person name="Lamerdin J.E."/>
            <person name="Regala W."/>
            <person name="Allen E.E."/>
            <person name="McCarren J."/>
            <person name="Paulsen I.T."/>
            <person name="Dufresne A."/>
            <person name="Partensky F."/>
            <person name="Webb E.A."/>
            <person name="Waterbury J."/>
        </authorList>
    </citation>
    <scope>NUCLEOTIDE SEQUENCE [LARGE SCALE GENOMIC DNA]</scope>
    <source>
        <strain>WH8102</strain>
    </source>
</reference>
<feature type="chain" id="PRO_0000217639" description="Photosystem I assembly protein Ycf4">
    <location>
        <begin position="1"/>
        <end position="178"/>
    </location>
</feature>
<feature type="transmembrane region" description="Helical" evidence="2">
    <location>
        <begin position="19"/>
        <end position="41"/>
    </location>
</feature>
<feature type="transmembrane region" description="Helical" evidence="2">
    <location>
        <begin position="61"/>
        <end position="83"/>
    </location>
</feature>
<accession>Q7U8E3</accession>
<evidence type="ECO:0000250" key="1"/>
<evidence type="ECO:0000255" key="2"/>
<evidence type="ECO:0000305" key="3"/>
<proteinExistence type="inferred from homology"/>
<gene>
    <name type="primary">ycf4</name>
    <name type="ordered locus">SYNW0678</name>
</gene>
<organism>
    <name type="scientific">Parasynechococcus marenigrum (strain WH8102)</name>
    <dbReference type="NCBI Taxonomy" id="84588"/>
    <lineage>
        <taxon>Bacteria</taxon>
        <taxon>Bacillati</taxon>
        <taxon>Cyanobacteriota</taxon>
        <taxon>Cyanophyceae</taxon>
        <taxon>Synechococcales</taxon>
        <taxon>Prochlorococcaceae</taxon>
        <taxon>Parasynechococcus</taxon>
        <taxon>Parasynechococcus marenigrum</taxon>
    </lineage>
</organism>
<sequence length="178" mass="19105">MSAEVLEQPVLGSRRLSNYLVAAAVSIGGIGFLLASLSSYLGRDLLPLGHPAALIFVPQGLVMGLYSIAAALLATYLWYVIAVDVGGGSNRFDKAAGVVTVSRRGFRKPVLVEIPLKDVKAVKVEVRDGFNARRRVALRIQGRRDMPLTRVGEPLPLAQLEQDGAELARFLGVNLEGL</sequence>
<comment type="function">
    <text evidence="1">Seems to be required for the assembly of the photosystem I complex.</text>
</comment>
<comment type="subcellular location">
    <subcellularLocation>
        <location evidence="1">Cellular thylakoid membrane</location>
        <topology evidence="1">Multi-pass membrane protein</topology>
    </subcellularLocation>
</comment>
<comment type="similarity">
    <text evidence="3">Belongs to the Ycf4 family.</text>
</comment>
<comment type="sequence caution" evidence="3">
    <conflict type="erroneous initiation">
        <sequence resource="EMBL-CDS" id="CAE07193"/>
    </conflict>
</comment>
<dbReference type="EMBL" id="BX569690">
    <property type="protein sequence ID" value="CAE07193.1"/>
    <property type="status" value="ALT_INIT"/>
    <property type="molecule type" value="Genomic_DNA"/>
</dbReference>
<dbReference type="RefSeq" id="WP_042503100.1">
    <property type="nucleotide sequence ID" value="NC_005070.1"/>
</dbReference>
<dbReference type="SMR" id="Q7U8E3"/>
<dbReference type="STRING" id="84588.SYNW0678"/>
<dbReference type="KEGG" id="syw:SYNW0678"/>
<dbReference type="eggNOG" id="ENOG502Z7YX">
    <property type="taxonomic scope" value="Bacteria"/>
</dbReference>
<dbReference type="HOGENOM" id="CLU_095465_0_0_3"/>
<dbReference type="Proteomes" id="UP000001422">
    <property type="component" value="Chromosome"/>
</dbReference>
<dbReference type="GO" id="GO:0009522">
    <property type="term" value="C:photosystem I"/>
    <property type="evidence" value="ECO:0007669"/>
    <property type="project" value="InterPro"/>
</dbReference>
<dbReference type="GO" id="GO:0031676">
    <property type="term" value="C:plasma membrane-derived thylakoid membrane"/>
    <property type="evidence" value="ECO:0007669"/>
    <property type="project" value="UniProtKB-SubCell"/>
</dbReference>
<dbReference type="GO" id="GO:0015979">
    <property type="term" value="P:photosynthesis"/>
    <property type="evidence" value="ECO:0007669"/>
    <property type="project" value="UniProtKB-UniRule"/>
</dbReference>
<dbReference type="HAMAP" id="MF_00437">
    <property type="entry name" value="Ycf4"/>
    <property type="match status" value="1"/>
</dbReference>
<dbReference type="InterPro" id="IPR003359">
    <property type="entry name" value="PSI_Ycf4_assembly"/>
</dbReference>
<dbReference type="NCBIfam" id="NF002712">
    <property type="entry name" value="PRK02542.1"/>
    <property type="match status" value="1"/>
</dbReference>
<dbReference type="Pfam" id="PF02392">
    <property type="entry name" value="Ycf4"/>
    <property type="match status" value="1"/>
</dbReference>